<keyword id="KW-0067">ATP-binding</keyword>
<keyword id="KW-0997">Cell inner membrane</keyword>
<keyword id="KW-1003">Cell membrane</keyword>
<keyword id="KW-0418">Kinase</keyword>
<keyword id="KW-0472">Membrane</keyword>
<keyword id="KW-0547">Nucleotide-binding</keyword>
<keyword id="KW-0808">Transferase</keyword>
<keyword id="KW-0812">Transmembrane</keyword>
<keyword id="KW-1133">Transmembrane helix</keyword>
<keyword id="KW-0831">Ubiquinone biosynthesis</keyword>
<name>UBIB_PSEU2</name>
<organism>
    <name type="scientific">Pseudomonas syringae pv. syringae (strain B728a)</name>
    <dbReference type="NCBI Taxonomy" id="205918"/>
    <lineage>
        <taxon>Bacteria</taxon>
        <taxon>Pseudomonadati</taxon>
        <taxon>Pseudomonadota</taxon>
        <taxon>Gammaproteobacteria</taxon>
        <taxon>Pseudomonadales</taxon>
        <taxon>Pseudomonadaceae</taxon>
        <taxon>Pseudomonas</taxon>
        <taxon>Pseudomonas syringae</taxon>
    </lineage>
</organism>
<dbReference type="EC" id="2.7.-.-" evidence="1"/>
<dbReference type="EMBL" id="CP000075">
    <property type="protein sequence ID" value="AAY35457.1"/>
    <property type="molecule type" value="Genomic_DNA"/>
</dbReference>
<dbReference type="RefSeq" id="WP_011266367.1">
    <property type="nucleotide sequence ID" value="NC_007005.1"/>
</dbReference>
<dbReference type="RefSeq" id="YP_233495.1">
    <property type="nucleotide sequence ID" value="NC_007005.1"/>
</dbReference>
<dbReference type="SMR" id="Q4ZZG5"/>
<dbReference type="STRING" id="205918.Psyr_0387"/>
<dbReference type="KEGG" id="psb:Psyr_0387"/>
<dbReference type="PATRIC" id="fig|205918.7.peg.400"/>
<dbReference type="eggNOG" id="COG0661">
    <property type="taxonomic scope" value="Bacteria"/>
</dbReference>
<dbReference type="HOGENOM" id="CLU_006533_0_0_6"/>
<dbReference type="OrthoDB" id="9795390at2"/>
<dbReference type="UniPathway" id="UPA00232"/>
<dbReference type="Proteomes" id="UP000000426">
    <property type="component" value="Chromosome"/>
</dbReference>
<dbReference type="GO" id="GO:0005886">
    <property type="term" value="C:plasma membrane"/>
    <property type="evidence" value="ECO:0007669"/>
    <property type="project" value="UniProtKB-SubCell"/>
</dbReference>
<dbReference type="GO" id="GO:0005524">
    <property type="term" value="F:ATP binding"/>
    <property type="evidence" value="ECO:0007669"/>
    <property type="project" value="UniProtKB-KW"/>
</dbReference>
<dbReference type="GO" id="GO:0004672">
    <property type="term" value="F:protein kinase activity"/>
    <property type="evidence" value="ECO:0007669"/>
    <property type="project" value="UniProtKB-UniRule"/>
</dbReference>
<dbReference type="GO" id="GO:0010795">
    <property type="term" value="P:regulation of ubiquinone biosynthetic process"/>
    <property type="evidence" value="ECO:0007669"/>
    <property type="project" value="UniProtKB-UniRule"/>
</dbReference>
<dbReference type="GO" id="GO:0006744">
    <property type="term" value="P:ubiquinone biosynthetic process"/>
    <property type="evidence" value="ECO:0007669"/>
    <property type="project" value="UniProtKB-UniPathway"/>
</dbReference>
<dbReference type="CDD" id="cd13972">
    <property type="entry name" value="UbiB"/>
    <property type="match status" value="1"/>
</dbReference>
<dbReference type="HAMAP" id="MF_00414">
    <property type="entry name" value="UbiB"/>
    <property type="match status" value="1"/>
</dbReference>
<dbReference type="InterPro" id="IPR004147">
    <property type="entry name" value="ABC1_dom"/>
</dbReference>
<dbReference type="InterPro" id="IPR011009">
    <property type="entry name" value="Kinase-like_dom_sf"/>
</dbReference>
<dbReference type="InterPro" id="IPR010232">
    <property type="entry name" value="UbiB"/>
</dbReference>
<dbReference type="InterPro" id="IPR045308">
    <property type="entry name" value="UbiB_bact"/>
</dbReference>
<dbReference type="InterPro" id="IPR050154">
    <property type="entry name" value="UbiB_kinase"/>
</dbReference>
<dbReference type="NCBIfam" id="NF003404">
    <property type="entry name" value="PRK04750.1"/>
    <property type="match status" value="1"/>
</dbReference>
<dbReference type="NCBIfam" id="TIGR01982">
    <property type="entry name" value="UbiB"/>
    <property type="match status" value="1"/>
</dbReference>
<dbReference type="PANTHER" id="PTHR10566">
    <property type="entry name" value="CHAPERONE-ACTIVITY OF BC1 COMPLEX CABC1 -RELATED"/>
    <property type="match status" value="1"/>
</dbReference>
<dbReference type="PANTHER" id="PTHR10566:SF113">
    <property type="entry name" value="PROTEIN ACTIVITY OF BC1 COMPLEX KINASE 7, CHLOROPLASTIC"/>
    <property type="match status" value="1"/>
</dbReference>
<dbReference type="Pfam" id="PF03109">
    <property type="entry name" value="ABC1"/>
    <property type="match status" value="1"/>
</dbReference>
<dbReference type="SUPFAM" id="SSF56112">
    <property type="entry name" value="Protein kinase-like (PK-like)"/>
    <property type="match status" value="1"/>
</dbReference>
<gene>
    <name evidence="1" type="primary">ubiB</name>
    <name type="ordered locus">Psyr_0387</name>
</gene>
<feature type="chain" id="PRO_1000050052" description="Probable protein kinase UbiB">
    <location>
        <begin position="1"/>
        <end position="539"/>
    </location>
</feature>
<feature type="transmembrane region" description="Helical" evidence="1">
    <location>
        <begin position="23"/>
        <end position="43"/>
    </location>
</feature>
<feature type="transmembrane region" description="Helical" evidence="1">
    <location>
        <begin position="494"/>
        <end position="514"/>
    </location>
</feature>
<feature type="transmembrane region" description="Helical" evidence="1">
    <location>
        <begin position="517"/>
        <end position="537"/>
    </location>
</feature>
<feature type="domain" description="Protein kinase" evidence="1">
    <location>
        <begin position="125"/>
        <end position="492"/>
    </location>
</feature>
<feature type="active site" description="Proton acceptor" evidence="1">
    <location>
        <position position="288"/>
    </location>
</feature>
<feature type="binding site" evidence="1">
    <location>
        <begin position="131"/>
        <end position="139"/>
    </location>
    <ligand>
        <name>ATP</name>
        <dbReference type="ChEBI" id="CHEBI:30616"/>
    </ligand>
</feature>
<feature type="binding site" evidence="1">
    <location>
        <position position="153"/>
    </location>
    <ligand>
        <name>ATP</name>
        <dbReference type="ChEBI" id="CHEBI:30616"/>
    </ligand>
</feature>
<accession>Q4ZZG5</accession>
<sequence length="539" mass="62257">MKLLAVRRLFRIQRVVIRYRLDDLLFALPLPWWMLALRFVLPWRWLPRRKSELSRGVRFRLALQDLGPIFIKFGQLLSTRRDLLPEDIADELMLLQDRVPPFDQQLAIKLIEEQLGARICDVFSRFDEKPLASASVAQVHAACLKTGEEVVVKVVRPGLKPIIGQDLAWLFILARMAERVSADARLLHPVQVVMDYEKTIYDELDLLREAANASQLRRNFEGSDLLYVPQVYWDWCRPKVLVMERIYGLQVTDMAGLADQRTDMKLLAERGVEIFFTQIFRDSFFHADMHPGNIFVSTVNPWAPKYIAIDCGIVGSLTPEDQDYLARNLFAFFKRDYRRVAQLHIDSGWVPAETKLNEFEAAIRTVCEPIFEKPLKDISFGQVLMRLFQTARRFNMEVQPQLVLLQKTLLNIEGLGRQLYPELDLWSTAQPYLERWMRERVSPKTLLGNLQSQVEQLPHIAGMTRDLLERMSRPHASDPPRPWHDRKDEPVLRLIGAALLVGGAIQGWVMSEAATQLLTLTAWPAAIMLIAGLYLIVRR</sequence>
<evidence type="ECO:0000255" key="1">
    <source>
        <dbReference type="HAMAP-Rule" id="MF_00414"/>
    </source>
</evidence>
<protein>
    <recommendedName>
        <fullName evidence="1">Probable protein kinase UbiB</fullName>
        <ecNumber evidence="1">2.7.-.-</ecNumber>
    </recommendedName>
    <alternativeName>
        <fullName evidence="1">Ubiquinone biosynthesis protein UbiB</fullName>
    </alternativeName>
</protein>
<reference key="1">
    <citation type="journal article" date="2005" name="Proc. Natl. Acad. Sci. U.S.A.">
        <title>Comparison of the complete genome sequences of Pseudomonas syringae pv. syringae B728a and pv. tomato DC3000.</title>
        <authorList>
            <person name="Feil H."/>
            <person name="Feil W.S."/>
            <person name="Chain P."/>
            <person name="Larimer F."/>
            <person name="Dibartolo G."/>
            <person name="Copeland A."/>
            <person name="Lykidis A."/>
            <person name="Trong S."/>
            <person name="Nolan M."/>
            <person name="Goltsman E."/>
            <person name="Thiel J."/>
            <person name="Malfatti S."/>
            <person name="Loper J.E."/>
            <person name="Lapidus A."/>
            <person name="Detter J.C."/>
            <person name="Land M."/>
            <person name="Richardson P.M."/>
            <person name="Kyrpides N.C."/>
            <person name="Ivanova N."/>
            <person name="Lindow S.E."/>
        </authorList>
    </citation>
    <scope>NUCLEOTIDE SEQUENCE [LARGE SCALE GENOMIC DNA]</scope>
    <source>
        <strain>B728a</strain>
    </source>
</reference>
<proteinExistence type="inferred from homology"/>
<comment type="function">
    <text evidence="1">Is probably a protein kinase regulator of UbiI activity which is involved in aerobic coenzyme Q (ubiquinone) biosynthesis.</text>
</comment>
<comment type="pathway">
    <text>Cofactor biosynthesis; ubiquinone biosynthesis [regulation].</text>
</comment>
<comment type="subcellular location">
    <subcellularLocation>
        <location evidence="1">Cell inner membrane</location>
        <topology evidence="1">Multi-pass membrane protein</topology>
    </subcellularLocation>
</comment>
<comment type="similarity">
    <text evidence="1">Belongs to the ABC1 family. UbiB subfamily.</text>
</comment>